<reference key="1">
    <citation type="submission" date="2007-04" db="EMBL/GenBank/DDBJ databases">
        <title>Complete sequence of Shewanella putrefaciens CN-32.</title>
        <authorList>
            <consortium name="US DOE Joint Genome Institute"/>
            <person name="Copeland A."/>
            <person name="Lucas S."/>
            <person name="Lapidus A."/>
            <person name="Barry K."/>
            <person name="Detter J.C."/>
            <person name="Glavina del Rio T."/>
            <person name="Hammon N."/>
            <person name="Israni S."/>
            <person name="Dalin E."/>
            <person name="Tice H."/>
            <person name="Pitluck S."/>
            <person name="Chain P."/>
            <person name="Malfatti S."/>
            <person name="Shin M."/>
            <person name="Vergez L."/>
            <person name="Schmutz J."/>
            <person name="Larimer F."/>
            <person name="Land M."/>
            <person name="Hauser L."/>
            <person name="Kyrpides N."/>
            <person name="Mikhailova N."/>
            <person name="Romine M.F."/>
            <person name="Fredrickson J."/>
            <person name="Tiedje J."/>
            <person name="Richardson P."/>
        </authorList>
    </citation>
    <scope>NUCLEOTIDE SEQUENCE [LARGE SCALE GENOMIC DNA]</scope>
    <source>
        <strain>CN-32 / ATCC BAA-453</strain>
    </source>
</reference>
<protein>
    <recommendedName>
        <fullName evidence="1">Large ribosomal subunit protein uL16</fullName>
    </recommendedName>
    <alternativeName>
        <fullName evidence="2">50S ribosomal protein L16</fullName>
    </alternativeName>
</protein>
<comment type="function">
    <text evidence="1">Binds 23S rRNA and is also seen to make contacts with the A and possibly P site tRNAs.</text>
</comment>
<comment type="subunit">
    <text evidence="1">Part of the 50S ribosomal subunit.</text>
</comment>
<comment type="similarity">
    <text evidence="1">Belongs to the universal ribosomal protein uL16 family.</text>
</comment>
<dbReference type="EMBL" id="CP000681">
    <property type="protein sequence ID" value="ABP77459.1"/>
    <property type="molecule type" value="Genomic_DNA"/>
</dbReference>
<dbReference type="SMR" id="A4YBX6"/>
<dbReference type="STRING" id="319224.Sputcn32_3752"/>
<dbReference type="KEGG" id="spc:Sputcn32_3752"/>
<dbReference type="eggNOG" id="COG0197">
    <property type="taxonomic scope" value="Bacteria"/>
</dbReference>
<dbReference type="HOGENOM" id="CLU_078858_2_1_6"/>
<dbReference type="GO" id="GO:0022625">
    <property type="term" value="C:cytosolic large ribosomal subunit"/>
    <property type="evidence" value="ECO:0007669"/>
    <property type="project" value="TreeGrafter"/>
</dbReference>
<dbReference type="GO" id="GO:0019843">
    <property type="term" value="F:rRNA binding"/>
    <property type="evidence" value="ECO:0007669"/>
    <property type="project" value="UniProtKB-UniRule"/>
</dbReference>
<dbReference type="GO" id="GO:0003735">
    <property type="term" value="F:structural constituent of ribosome"/>
    <property type="evidence" value="ECO:0007669"/>
    <property type="project" value="InterPro"/>
</dbReference>
<dbReference type="GO" id="GO:0000049">
    <property type="term" value="F:tRNA binding"/>
    <property type="evidence" value="ECO:0007669"/>
    <property type="project" value="UniProtKB-KW"/>
</dbReference>
<dbReference type="GO" id="GO:0006412">
    <property type="term" value="P:translation"/>
    <property type="evidence" value="ECO:0007669"/>
    <property type="project" value="UniProtKB-UniRule"/>
</dbReference>
<dbReference type="CDD" id="cd01433">
    <property type="entry name" value="Ribosomal_L16_L10e"/>
    <property type="match status" value="1"/>
</dbReference>
<dbReference type="FunFam" id="3.90.1170.10:FF:000001">
    <property type="entry name" value="50S ribosomal protein L16"/>
    <property type="match status" value="1"/>
</dbReference>
<dbReference type="Gene3D" id="3.90.1170.10">
    <property type="entry name" value="Ribosomal protein L10e/L16"/>
    <property type="match status" value="1"/>
</dbReference>
<dbReference type="HAMAP" id="MF_01342">
    <property type="entry name" value="Ribosomal_uL16"/>
    <property type="match status" value="1"/>
</dbReference>
<dbReference type="InterPro" id="IPR047873">
    <property type="entry name" value="Ribosomal_uL16"/>
</dbReference>
<dbReference type="InterPro" id="IPR000114">
    <property type="entry name" value="Ribosomal_uL16_bact-type"/>
</dbReference>
<dbReference type="InterPro" id="IPR020798">
    <property type="entry name" value="Ribosomal_uL16_CS"/>
</dbReference>
<dbReference type="InterPro" id="IPR016180">
    <property type="entry name" value="Ribosomal_uL16_dom"/>
</dbReference>
<dbReference type="InterPro" id="IPR036920">
    <property type="entry name" value="Ribosomal_uL16_sf"/>
</dbReference>
<dbReference type="NCBIfam" id="TIGR01164">
    <property type="entry name" value="rplP_bact"/>
    <property type="match status" value="1"/>
</dbReference>
<dbReference type="PANTHER" id="PTHR12220">
    <property type="entry name" value="50S/60S RIBOSOMAL PROTEIN L16"/>
    <property type="match status" value="1"/>
</dbReference>
<dbReference type="PANTHER" id="PTHR12220:SF13">
    <property type="entry name" value="LARGE RIBOSOMAL SUBUNIT PROTEIN UL16M"/>
    <property type="match status" value="1"/>
</dbReference>
<dbReference type="Pfam" id="PF00252">
    <property type="entry name" value="Ribosomal_L16"/>
    <property type="match status" value="1"/>
</dbReference>
<dbReference type="PRINTS" id="PR00060">
    <property type="entry name" value="RIBOSOMALL16"/>
</dbReference>
<dbReference type="SUPFAM" id="SSF54686">
    <property type="entry name" value="Ribosomal protein L16p/L10e"/>
    <property type="match status" value="1"/>
</dbReference>
<dbReference type="PROSITE" id="PS00586">
    <property type="entry name" value="RIBOSOMAL_L16_1"/>
    <property type="match status" value="1"/>
</dbReference>
<dbReference type="PROSITE" id="PS00701">
    <property type="entry name" value="RIBOSOMAL_L16_2"/>
    <property type="match status" value="1"/>
</dbReference>
<name>RL16_SHEPC</name>
<proteinExistence type="inferred from homology"/>
<evidence type="ECO:0000255" key="1">
    <source>
        <dbReference type="HAMAP-Rule" id="MF_01342"/>
    </source>
</evidence>
<evidence type="ECO:0000305" key="2"/>
<feature type="chain" id="PRO_1000054704" description="Large ribosomal subunit protein uL16">
    <location>
        <begin position="1"/>
        <end position="136"/>
    </location>
</feature>
<organism>
    <name type="scientific">Shewanella putrefaciens (strain CN-32 / ATCC BAA-453)</name>
    <dbReference type="NCBI Taxonomy" id="319224"/>
    <lineage>
        <taxon>Bacteria</taxon>
        <taxon>Pseudomonadati</taxon>
        <taxon>Pseudomonadota</taxon>
        <taxon>Gammaproteobacteria</taxon>
        <taxon>Alteromonadales</taxon>
        <taxon>Shewanellaceae</taxon>
        <taxon>Shewanella</taxon>
    </lineage>
</organism>
<gene>
    <name evidence="1" type="primary">rplP</name>
    <name type="ordered locus">Sputcn32_3752</name>
</gene>
<sequence>MLQPKRMKFRKMFKGRNRGLANGTEVSFGTFGLKAVGRGRLTARQIESARRAMTRHIKRQGQIWIRVFPDKPITSKPLEVRMGKGKGNVEYWVCQIQPGKVLYEMNGVSEVIAREAFALAAAKLPIKTTFVTKTVM</sequence>
<keyword id="KW-0687">Ribonucleoprotein</keyword>
<keyword id="KW-0689">Ribosomal protein</keyword>
<keyword id="KW-0694">RNA-binding</keyword>
<keyword id="KW-0699">rRNA-binding</keyword>
<keyword id="KW-0820">tRNA-binding</keyword>
<accession>A4YBX6</accession>